<feature type="chain" id="PRO_0000137026" description="Nucleoside diphosphate kinase">
    <location>
        <begin position="1"/>
        <end position="141"/>
    </location>
</feature>
<feature type="active site" description="Pros-phosphohistidine intermediate" evidence="1">
    <location>
        <position position="117"/>
    </location>
</feature>
<feature type="binding site" evidence="1">
    <location>
        <position position="11"/>
    </location>
    <ligand>
        <name>ATP</name>
        <dbReference type="ChEBI" id="CHEBI:30616"/>
    </ligand>
</feature>
<feature type="binding site" evidence="1">
    <location>
        <position position="59"/>
    </location>
    <ligand>
        <name>ATP</name>
        <dbReference type="ChEBI" id="CHEBI:30616"/>
    </ligand>
</feature>
<feature type="binding site" evidence="1">
    <location>
        <position position="87"/>
    </location>
    <ligand>
        <name>ATP</name>
        <dbReference type="ChEBI" id="CHEBI:30616"/>
    </ligand>
</feature>
<feature type="binding site" evidence="1">
    <location>
        <position position="93"/>
    </location>
    <ligand>
        <name>ATP</name>
        <dbReference type="ChEBI" id="CHEBI:30616"/>
    </ligand>
</feature>
<feature type="binding site" evidence="1">
    <location>
        <position position="104"/>
    </location>
    <ligand>
        <name>ATP</name>
        <dbReference type="ChEBI" id="CHEBI:30616"/>
    </ligand>
</feature>
<feature type="binding site" evidence="1">
    <location>
        <position position="114"/>
    </location>
    <ligand>
        <name>ATP</name>
        <dbReference type="ChEBI" id="CHEBI:30616"/>
    </ligand>
</feature>
<reference key="1">
    <citation type="journal article" date="2003" name="Proc. Natl. Acad. Sci. U.S.A.">
        <title>The complete genome sequence of the Arabidopsis and tomato pathogen Pseudomonas syringae pv. tomato DC3000.</title>
        <authorList>
            <person name="Buell C.R."/>
            <person name="Joardar V."/>
            <person name="Lindeberg M."/>
            <person name="Selengut J."/>
            <person name="Paulsen I.T."/>
            <person name="Gwinn M.L."/>
            <person name="Dodson R.J."/>
            <person name="DeBoy R.T."/>
            <person name="Durkin A.S."/>
            <person name="Kolonay J.F."/>
            <person name="Madupu R."/>
            <person name="Daugherty S.C."/>
            <person name="Brinkac L.M."/>
            <person name="Beanan M.J."/>
            <person name="Haft D.H."/>
            <person name="Nelson W.C."/>
            <person name="Davidsen T.M."/>
            <person name="Zafar N."/>
            <person name="Zhou L."/>
            <person name="Liu J."/>
            <person name="Yuan Q."/>
            <person name="Khouri H.M."/>
            <person name="Fedorova N.B."/>
            <person name="Tran B."/>
            <person name="Russell D."/>
            <person name="Berry K.J."/>
            <person name="Utterback T.R."/>
            <person name="Van Aken S.E."/>
            <person name="Feldblyum T.V."/>
            <person name="D'Ascenzo M."/>
            <person name="Deng W.-L."/>
            <person name="Ramos A.R."/>
            <person name="Alfano J.R."/>
            <person name="Cartinhour S."/>
            <person name="Chatterjee A.K."/>
            <person name="Delaney T.P."/>
            <person name="Lazarowitz S.G."/>
            <person name="Martin G.B."/>
            <person name="Schneider D.J."/>
            <person name="Tang X."/>
            <person name="Bender C.L."/>
            <person name="White O."/>
            <person name="Fraser C.M."/>
            <person name="Collmer A."/>
        </authorList>
    </citation>
    <scope>NUCLEOTIDE SEQUENCE [LARGE SCALE GENOMIC DNA]</scope>
    <source>
        <strain>ATCC BAA-871 / DC3000</strain>
    </source>
</reference>
<protein>
    <recommendedName>
        <fullName evidence="1">Nucleoside diphosphate kinase</fullName>
        <shortName evidence="1">NDK</shortName>
        <shortName evidence="1">NDP kinase</shortName>
        <ecNumber evidence="1">2.7.4.6</ecNumber>
    </recommendedName>
    <alternativeName>
        <fullName evidence="1">Nucleoside-2-P kinase</fullName>
    </alternativeName>
</protein>
<comment type="function">
    <text evidence="1">Major role in the synthesis of nucleoside triphosphates other than ATP. The ATP gamma phosphate is transferred to the NDP beta phosphate via a ping-pong mechanism, using a phosphorylated active-site intermediate.</text>
</comment>
<comment type="catalytic activity">
    <reaction evidence="1">
        <text>a 2'-deoxyribonucleoside 5'-diphosphate + ATP = a 2'-deoxyribonucleoside 5'-triphosphate + ADP</text>
        <dbReference type="Rhea" id="RHEA:44640"/>
        <dbReference type="ChEBI" id="CHEBI:30616"/>
        <dbReference type="ChEBI" id="CHEBI:61560"/>
        <dbReference type="ChEBI" id="CHEBI:73316"/>
        <dbReference type="ChEBI" id="CHEBI:456216"/>
        <dbReference type="EC" id="2.7.4.6"/>
    </reaction>
</comment>
<comment type="catalytic activity">
    <reaction evidence="1">
        <text>a ribonucleoside 5'-diphosphate + ATP = a ribonucleoside 5'-triphosphate + ADP</text>
        <dbReference type="Rhea" id="RHEA:18113"/>
        <dbReference type="ChEBI" id="CHEBI:30616"/>
        <dbReference type="ChEBI" id="CHEBI:57930"/>
        <dbReference type="ChEBI" id="CHEBI:61557"/>
        <dbReference type="ChEBI" id="CHEBI:456216"/>
        <dbReference type="EC" id="2.7.4.6"/>
    </reaction>
</comment>
<comment type="cofactor">
    <cofactor evidence="1">
        <name>Mg(2+)</name>
        <dbReference type="ChEBI" id="CHEBI:18420"/>
    </cofactor>
</comment>
<comment type="subunit">
    <text evidence="1">Homotetramer.</text>
</comment>
<comment type="subcellular location">
    <subcellularLocation>
        <location evidence="1">Cytoplasm</location>
    </subcellularLocation>
</comment>
<comment type="similarity">
    <text evidence="1">Belongs to the NDK family.</text>
</comment>
<accession>Q886Z4</accession>
<proteinExistence type="inferred from homology"/>
<keyword id="KW-0067">ATP-binding</keyword>
<keyword id="KW-0963">Cytoplasm</keyword>
<keyword id="KW-0418">Kinase</keyword>
<keyword id="KW-0460">Magnesium</keyword>
<keyword id="KW-0479">Metal-binding</keyword>
<keyword id="KW-0546">Nucleotide metabolism</keyword>
<keyword id="KW-0547">Nucleotide-binding</keyword>
<keyword id="KW-0597">Phosphoprotein</keyword>
<keyword id="KW-1185">Reference proteome</keyword>
<keyword id="KW-0808">Transferase</keyword>
<evidence type="ECO:0000255" key="1">
    <source>
        <dbReference type="HAMAP-Rule" id="MF_00451"/>
    </source>
</evidence>
<name>NDK_PSESM</name>
<organism>
    <name type="scientific">Pseudomonas syringae pv. tomato (strain ATCC BAA-871 / DC3000)</name>
    <dbReference type="NCBI Taxonomy" id="223283"/>
    <lineage>
        <taxon>Bacteria</taxon>
        <taxon>Pseudomonadati</taxon>
        <taxon>Pseudomonadota</taxon>
        <taxon>Gammaproteobacteria</taxon>
        <taxon>Pseudomonadales</taxon>
        <taxon>Pseudomonadaceae</taxon>
        <taxon>Pseudomonas</taxon>
    </lineage>
</organism>
<dbReference type="EC" id="2.7.4.6" evidence="1"/>
<dbReference type="EMBL" id="AE016853">
    <property type="protein sequence ID" value="AAO54951.1"/>
    <property type="molecule type" value="Genomic_DNA"/>
</dbReference>
<dbReference type="RefSeq" id="NP_791256.1">
    <property type="nucleotide sequence ID" value="NC_004578.1"/>
</dbReference>
<dbReference type="RefSeq" id="WP_002552482.1">
    <property type="nucleotide sequence ID" value="NC_004578.1"/>
</dbReference>
<dbReference type="SMR" id="Q886Z4"/>
<dbReference type="STRING" id="223283.PSPTO_1430"/>
<dbReference type="GeneID" id="96217648"/>
<dbReference type="KEGG" id="pst:PSPTO_1430"/>
<dbReference type="PATRIC" id="fig|223283.9.peg.1450"/>
<dbReference type="eggNOG" id="COG0105">
    <property type="taxonomic scope" value="Bacteria"/>
</dbReference>
<dbReference type="HOGENOM" id="CLU_060216_8_1_6"/>
<dbReference type="OrthoDB" id="9801161at2"/>
<dbReference type="PhylomeDB" id="Q886Z4"/>
<dbReference type="Proteomes" id="UP000002515">
    <property type="component" value="Chromosome"/>
</dbReference>
<dbReference type="GO" id="GO:0005737">
    <property type="term" value="C:cytoplasm"/>
    <property type="evidence" value="ECO:0007669"/>
    <property type="project" value="UniProtKB-SubCell"/>
</dbReference>
<dbReference type="GO" id="GO:0005524">
    <property type="term" value="F:ATP binding"/>
    <property type="evidence" value="ECO:0007669"/>
    <property type="project" value="UniProtKB-UniRule"/>
</dbReference>
<dbReference type="GO" id="GO:0046872">
    <property type="term" value="F:metal ion binding"/>
    <property type="evidence" value="ECO:0007669"/>
    <property type="project" value="UniProtKB-KW"/>
</dbReference>
<dbReference type="GO" id="GO:0004550">
    <property type="term" value="F:nucleoside diphosphate kinase activity"/>
    <property type="evidence" value="ECO:0007669"/>
    <property type="project" value="UniProtKB-UniRule"/>
</dbReference>
<dbReference type="GO" id="GO:0006241">
    <property type="term" value="P:CTP biosynthetic process"/>
    <property type="evidence" value="ECO:0007669"/>
    <property type="project" value="UniProtKB-UniRule"/>
</dbReference>
<dbReference type="GO" id="GO:0006183">
    <property type="term" value="P:GTP biosynthetic process"/>
    <property type="evidence" value="ECO:0007669"/>
    <property type="project" value="UniProtKB-UniRule"/>
</dbReference>
<dbReference type="GO" id="GO:0006228">
    <property type="term" value="P:UTP biosynthetic process"/>
    <property type="evidence" value="ECO:0007669"/>
    <property type="project" value="UniProtKB-UniRule"/>
</dbReference>
<dbReference type="CDD" id="cd04413">
    <property type="entry name" value="NDPk_I"/>
    <property type="match status" value="1"/>
</dbReference>
<dbReference type="FunFam" id="3.30.70.141:FF:000001">
    <property type="entry name" value="Nucleoside diphosphate kinase"/>
    <property type="match status" value="1"/>
</dbReference>
<dbReference type="Gene3D" id="3.30.70.141">
    <property type="entry name" value="Nucleoside diphosphate kinase-like domain"/>
    <property type="match status" value="1"/>
</dbReference>
<dbReference type="HAMAP" id="MF_00451">
    <property type="entry name" value="NDP_kinase"/>
    <property type="match status" value="1"/>
</dbReference>
<dbReference type="InterPro" id="IPR034907">
    <property type="entry name" value="NDK-like_dom"/>
</dbReference>
<dbReference type="InterPro" id="IPR036850">
    <property type="entry name" value="NDK-like_dom_sf"/>
</dbReference>
<dbReference type="InterPro" id="IPR001564">
    <property type="entry name" value="Nucleoside_diP_kinase"/>
</dbReference>
<dbReference type="InterPro" id="IPR023005">
    <property type="entry name" value="Nucleoside_diP_kinase_AS"/>
</dbReference>
<dbReference type="NCBIfam" id="NF001908">
    <property type="entry name" value="PRK00668.1"/>
    <property type="match status" value="1"/>
</dbReference>
<dbReference type="PANTHER" id="PTHR46161">
    <property type="entry name" value="NUCLEOSIDE DIPHOSPHATE KINASE"/>
    <property type="match status" value="1"/>
</dbReference>
<dbReference type="PANTHER" id="PTHR46161:SF3">
    <property type="entry name" value="NUCLEOSIDE DIPHOSPHATE KINASE DDB_G0292928-RELATED"/>
    <property type="match status" value="1"/>
</dbReference>
<dbReference type="Pfam" id="PF00334">
    <property type="entry name" value="NDK"/>
    <property type="match status" value="1"/>
</dbReference>
<dbReference type="PRINTS" id="PR01243">
    <property type="entry name" value="NUCDPKINASE"/>
</dbReference>
<dbReference type="SMART" id="SM00562">
    <property type="entry name" value="NDK"/>
    <property type="match status" value="1"/>
</dbReference>
<dbReference type="SUPFAM" id="SSF54919">
    <property type="entry name" value="Nucleoside diphosphate kinase, NDK"/>
    <property type="match status" value="1"/>
</dbReference>
<dbReference type="PROSITE" id="PS00469">
    <property type="entry name" value="NDPK"/>
    <property type="match status" value="1"/>
</dbReference>
<dbReference type="PROSITE" id="PS51374">
    <property type="entry name" value="NDPK_LIKE"/>
    <property type="match status" value="1"/>
</dbReference>
<sequence length="141" mass="14951">MAVQRTFSIIKPDAVAKNVIGEITTRFEKAGLRVVASKLKQLSKAEAEGFYAEHSARGFFGDLVAFMISGPVVVQVLEGENAIALNRELMGATNPKEAAAGTIRADFADSIDANAVHGSDSEAAAAREISYFFAATEVTAR</sequence>
<gene>
    <name evidence="1" type="primary">ndk</name>
    <name type="ordered locus">PSPTO_1430</name>
</gene>